<gene>
    <name evidence="4 9" type="primary">IGHV4-30-2</name>
</gene>
<proteinExistence type="evidence at protein level"/>
<sequence>MKHLWFFLLLVAAPRWVLSQLQLQESGSGLVKPSQTLSLTCAVSGGSISSGGYSWSWIRQPPGKGLEWIGYIYHSGSTYYNPSLKSRVTISVDRSKNQFSLKLSSVTAADTAVYYCAR</sequence>
<name>HV432_HUMAN</name>
<keyword id="KW-1064">Adaptive immunity</keyword>
<keyword id="KW-1003">Cell membrane</keyword>
<keyword id="KW-1015">Disulfide bond</keyword>
<keyword id="KW-0391">Immunity</keyword>
<keyword id="KW-1280">Immunoglobulin</keyword>
<keyword id="KW-0393">Immunoglobulin domain</keyword>
<keyword id="KW-0472">Membrane</keyword>
<keyword id="KW-1267">Proteomics identification</keyword>
<keyword id="KW-1185">Reference proteome</keyword>
<keyword id="KW-0964">Secreted</keyword>
<keyword id="KW-0732">Signal</keyword>
<organism>
    <name type="scientific">Homo sapiens</name>
    <name type="common">Human</name>
    <dbReference type="NCBI Taxonomy" id="9606"/>
    <lineage>
        <taxon>Eukaryota</taxon>
        <taxon>Metazoa</taxon>
        <taxon>Chordata</taxon>
        <taxon>Craniata</taxon>
        <taxon>Vertebrata</taxon>
        <taxon>Euteleostomi</taxon>
        <taxon>Mammalia</taxon>
        <taxon>Eutheria</taxon>
        <taxon>Euarchontoglires</taxon>
        <taxon>Primates</taxon>
        <taxon>Haplorrhini</taxon>
        <taxon>Catarrhini</taxon>
        <taxon>Hominidae</taxon>
        <taxon>Homo</taxon>
    </lineage>
</organism>
<dbReference type="EMBL" id="AC245166">
    <property type="status" value="NOT_ANNOTATED_CDS"/>
    <property type="molecule type" value="Genomic_DNA"/>
</dbReference>
<dbReference type="SMR" id="A0A087WSY4"/>
<dbReference type="FunCoup" id="A0A087WSY4">
    <property type="interactions" value="328"/>
</dbReference>
<dbReference type="IMGT_GENE-DB" id="IGHV4-30-2"/>
<dbReference type="BioMuta" id="HGNC:5647"/>
<dbReference type="MassIVE" id="A0A087WSY4"/>
<dbReference type="UCSC" id="uc059ggg.1">
    <property type="organism name" value="human"/>
</dbReference>
<dbReference type="AGR" id="HGNC:5647"/>
<dbReference type="GeneCards" id="IGHV4-30-2"/>
<dbReference type="HGNC" id="HGNC:5647">
    <property type="gene designation" value="IGHV4-30-2"/>
</dbReference>
<dbReference type="HPA" id="ENSG00000231475">
    <property type="expression patterns" value="Tissue enhanced (lymphoid tissue, urinary bladder)"/>
</dbReference>
<dbReference type="neXtProt" id="NX_A0A087WSY4"/>
<dbReference type="OpenTargets" id="ENSG00000231475"/>
<dbReference type="VEuPathDB" id="HostDB:ENSG00000231475"/>
<dbReference type="GeneTree" id="ENSGT01030000234536"/>
<dbReference type="HOGENOM" id="CLU_077975_5_0_1"/>
<dbReference type="InParanoid" id="A0A087WSY4"/>
<dbReference type="OMA" id="WARYTVK"/>
<dbReference type="OrthoDB" id="9945861at2759"/>
<dbReference type="PAN-GO" id="A0A087WSY4">
    <property type="GO annotations" value="11 GO annotations based on evolutionary models"/>
</dbReference>
<dbReference type="PhylomeDB" id="A0A087WSY4"/>
<dbReference type="SignaLink" id="A0A087WSY4"/>
<dbReference type="ChiTaRS" id="IGHV4-30-2">
    <property type="organism name" value="human"/>
</dbReference>
<dbReference type="Pharos" id="A0A087WSY4">
    <property type="development level" value="Tdark"/>
</dbReference>
<dbReference type="PRO" id="PR:A0A087WSY4"/>
<dbReference type="Proteomes" id="UP000005640">
    <property type="component" value="Chromosome 14"/>
</dbReference>
<dbReference type="RNAct" id="A0A087WSY4">
    <property type="molecule type" value="protein"/>
</dbReference>
<dbReference type="GO" id="GO:0005576">
    <property type="term" value="C:extracellular region"/>
    <property type="evidence" value="ECO:0007669"/>
    <property type="project" value="UniProtKB-SubCell"/>
</dbReference>
<dbReference type="GO" id="GO:0019814">
    <property type="term" value="C:immunoglobulin complex"/>
    <property type="evidence" value="ECO:0007669"/>
    <property type="project" value="UniProtKB-KW"/>
</dbReference>
<dbReference type="GO" id="GO:0005886">
    <property type="term" value="C:plasma membrane"/>
    <property type="evidence" value="ECO:0007669"/>
    <property type="project" value="UniProtKB-SubCell"/>
</dbReference>
<dbReference type="GO" id="GO:0003823">
    <property type="term" value="F:antigen binding"/>
    <property type="evidence" value="ECO:0000318"/>
    <property type="project" value="GO_Central"/>
</dbReference>
<dbReference type="GO" id="GO:0016064">
    <property type="term" value="P:immunoglobulin mediated immune response"/>
    <property type="evidence" value="ECO:0000318"/>
    <property type="project" value="GO_Central"/>
</dbReference>
<dbReference type="FunFam" id="2.60.40.10:FF:001119">
    <property type="entry name" value="Immunoglobulin heavy variable 4-30-4"/>
    <property type="match status" value="1"/>
</dbReference>
<dbReference type="Gene3D" id="2.60.40.10">
    <property type="entry name" value="Immunoglobulins"/>
    <property type="match status" value="1"/>
</dbReference>
<dbReference type="InterPro" id="IPR007110">
    <property type="entry name" value="Ig-like_dom"/>
</dbReference>
<dbReference type="InterPro" id="IPR036179">
    <property type="entry name" value="Ig-like_dom_sf"/>
</dbReference>
<dbReference type="InterPro" id="IPR013783">
    <property type="entry name" value="Ig-like_fold"/>
</dbReference>
<dbReference type="InterPro" id="IPR013106">
    <property type="entry name" value="Ig_V-set"/>
</dbReference>
<dbReference type="InterPro" id="IPR050199">
    <property type="entry name" value="IgHV"/>
</dbReference>
<dbReference type="PANTHER" id="PTHR23266">
    <property type="entry name" value="IMMUNOGLOBULIN HEAVY CHAIN"/>
    <property type="match status" value="1"/>
</dbReference>
<dbReference type="Pfam" id="PF07686">
    <property type="entry name" value="V-set"/>
    <property type="match status" value="1"/>
</dbReference>
<dbReference type="SMART" id="SM00406">
    <property type="entry name" value="IGv"/>
    <property type="match status" value="1"/>
</dbReference>
<dbReference type="SUPFAM" id="SSF48726">
    <property type="entry name" value="Immunoglobulin"/>
    <property type="match status" value="1"/>
</dbReference>
<dbReference type="PROSITE" id="PS50835">
    <property type="entry name" value="IG_LIKE"/>
    <property type="match status" value="1"/>
</dbReference>
<protein>
    <recommendedName>
        <fullName evidence="4 9">Immunoglobulin heavy variable 4-30-2</fullName>
    </recommendedName>
</protein>
<evidence type="ECO:0000250" key="1">
    <source>
        <dbReference type="UniProtKB" id="P23083"/>
    </source>
</evidence>
<evidence type="ECO:0000255" key="2"/>
<evidence type="ECO:0000255" key="3">
    <source>
        <dbReference type="PROSITE-ProRule" id="PRU00114"/>
    </source>
</evidence>
<evidence type="ECO:0000303" key="4">
    <source>
    </source>
</evidence>
<evidence type="ECO:0000303" key="5">
    <source>
    </source>
</evidence>
<evidence type="ECO:0000303" key="6">
    <source>
    </source>
</evidence>
<evidence type="ECO:0000303" key="7">
    <source>
    </source>
</evidence>
<evidence type="ECO:0000303" key="8">
    <source>
    </source>
</evidence>
<evidence type="ECO:0000303" key="9">
    <source ref="3"/>
</evidence>
<evidence type="ECO:0000305" key="10"/>
<reference key="1">
    <citation type="journal article" date="2003" name="Nature">
        <title>The DNA sequence and analysis of human chromosome 14.</title>
        <authorList>
            <person name="Heilig R."/>
            <person name="Eckenberg R."/>
            <person name="Petit J.-L."/>
            <person name="Fonknechten N."/>
            <person name="Da Silva C."/>
            <person name="Cattolico L."/>
            <person name="Levy M."/>
            <person name="Barbe V."/>
            <person name="De Berardinis V."/>
            <person name="Ureta-Vidal A."/>
            <person name="Pelletier E."/>
            <person name="Vico V."/>
            <person name="Anthouard V."/>
            <person name="Rowen L."/>
            <person name="Madan A."/>
            <person name="Qin S."/>
            <person name="Sun H."/>
            <person name="Du H."/>
            <person name="Pepin K."/>
            <person name="Artiguenave F."/>
            <person name="Robert C."/>
            <person name="Cruaud C."/>
            <person name="Bruels T."/>
            <person name="Jaillon O."/>
            <person name="Friedlander L."/>
            <person name="Samson G."/>
            <person name="Brottier P."/>
            <person name="Cure S."/>
            <person name="Segurens B."/>
            <person name="Aniere F."/>
            <person name="Samain S."/>
            <person name="Crespeau H."/>
            <person name="Abbasi N."/>
            <person name="Aiach N."/>
            <person name="Boscus D."/>
            <person name="Dickhoff R."/>
            <person name="Dors M."/>
            <person name="Dubois I."/>
            <person name="Friedman C."/>
            <person name="Gouyvenoux M."/>
            <person name="James R."/>
            <person name="Madan A."/>
            <person name="Mairey-Estrada B."/>
            <person name="Mangenot S."/>
            <person name="Martins N."/>
            <person name="Menard M."/>
            <person name="Oztas S."/>
            <person name="Ratcliffe A."/>
            <person name="Shaffer T."/>
            <person name="Trask B."/>
            <person name="Vacherie B."/>
            <person name="Bellemere C."/>
            <person name="Belser C."/>
            <person name="Besnard-Gonnet M."/>
            <person name="Bartol-Mavel D."/>
            <person name="Boutard M."/>
            <person name="Briez-Silla S."/>
            <person name="Combette S."/>
            <person name="Dufosse-Laurent V."/>
            <person name="Ferron C."/>
            <person name="Lechaplais C."/>
            <person name="Louesse C."/>
            <person name="Muselet D."/>
            <person name="Magdelenat G."/>
            <person name="Pateau E."/>
            <person name="Petit E."/>
            <person name="Sirvain-Trukniewicz P."/>
            <person name="Trybou A."/>
            <person name="Vega-Czarny N."/>
            <person name="Bataille E."/>
            <person name="Bluet E."/>
            <person name="Bordelais I."/>
            <person name="Dubois M."/>
            <person name="Dumont C."/>
            <person name="Guerin T."/>
            <person name="Haffray S."/>
            <person name="Hammadi R."/>
            <person name="Muanga J."/>
            <person name="Pellouin V."/>
            <person name="Robert D."/>
            <person name="Wunderle E."/>
            <person name="Gauguet G."/>
            <person name="Roy A."/>
            <person name="Sainte-Marthe L."/>
            <person name="Verdier J."/>
            <person name="Verdier-Discala C."/>
            <person name="Hillier L.W."/>
            <person name="Fulton L."/>
            <person name="McPherson J."/>
            <person name="Matsuda F."/>
            <person name="Wilson R."/>
            <person name="Scarpelli C."/>
            <person name="Gyapay G."/>
            <person name="Wincker P."/>
            <person name="Saurin W."/>
            <person name="Quetier F."/>
            <person name="Waterston R."/>
            <person name="Hood L."/>
            <person name="Weissenbach J."/>
        </authorList>
    </citation>
    <scope>NUCLEOTIDE SEQUENCE [LARGE SCALE GENOMIC DNA] (IMGT ALLELE IGHV4-30-2*01)</scope>
</reference>
<reference key="2">
    <citation type="journal article" date="2001" name="Exp. Clin. Immunogenet.">
        <title>Nomenclature of the human immunoglobulin heavy (IGH) genes.</title>
        <authorList>
            <person name="Lefranc M.P."/>
        </authorList>
    </citation>
    <scope>NOMENCLATURE</scope>
</reference>
<reference key="3">
    <citation type="book" date="2001" name="The Immunoglobulin FactsBook.">
        <title>The Immunoglobulin FactsBook.</title>
        <editorList>
            <person name="Lefranc M.P."/>
            <person name="Lefranc G."/>
        </editorList>
        <authorList>
            <person name="Lefranc M.P."/>
            <person name="Lefranc G."/>
        </authorList>
    </citation>
    <scope>NOMENCLATURE</scope>
</reference>
<reference key="4">
    <citation type="journal article" date="2007" name="Annu. Rev. Genet.">
        <title>Immunoglobulin somatic hypermutation.</title>
        <authorList>
            <person name="Teng G."/>
            <person name="Papavasiliou F.N."/>
        </authorList>
    </citation>
    <scope>REVIEW ON SOMATIC HYPERMUTATION</scope>
</reference>
<reference key="5">
    <citation type="journal article" date="2010" name="J. Allergy Clin. Immunol.">
        <title>Structure and function of immunoglobulins.</title>
        <authorList>
            <person name="Schroeder H.W. Jr."/>
            <person name="Cavacini L."/>
        </authorList>
    </citation>
    <scope>REVIEW ON IMMUNOGLOBULINS</scope>
</reference>
<reference key="6">
    <citation type="journal article" date="2012" name="Nat. Rev. Immunol.">
        <title>Molecular programming of B cell memory.</title>
        <authorList>
            <person name="McHeyzer-Williams M."/>
            <person name="Okitsu S."/>
            <person name="Wang N."/>
            <person name="McHeyzer-Williams L."/>
        </authorList>
    </citation>
    <scope>REVIEW ON FUNCTION</scope>
</reference>
<reference key="7">
    <citation type="journal article" date="2014" name="Front. Immunol.">
        <title>Immunoglobulin and T Cell Receptor Genes: IMGT((R)) and the Birth and Rise of Immunoinformatics.</title>
        <authorList>
            <person name="Lefranc M.P."/>
        </authorList>
    </citation>
    <scope>NOMENCLATURE</scope>
</reference>
<accession>A0A087WSY4</accession>
<comment type="function">
    <text evidence="5 6 7 8">V region of the variable domain of immunoglobulin heavy chains that participates in the antigen recognition (PubMed:24600447). Immunoglobulins, also known as antibodies, are membrane-bound or secreted glycoproteins produced by B lymphocytes. In the recognition phase of humoral immunity, the membrane-bound immunoglobulins serve as receptors which, upon binding of a specific antigen, trigger the clonal expansion and differentiation of B lymphocytes into immunoglobulins-secreting plasma cells. Secreted immunoglobulins mediate the effector phase of humoral immunity, which results in the elimination of bound antigens (PubMed:20176268, PubMed:22158414). The antigen binding site is formed by the variable domain of one heavy chain, together with that of its associated light chain. Thus, each immunoglobulin has two antigen binding sites with remarkable affinity for a particular antigen. The variable domains are assembled by a process called V-(D)-J rearrangement and can then be subjected to somatic hypermutations which, after exposure to antigen and selection, allow affinity maturation for a particular antigen (PubMed:17576170, PubMed:20176268).</text>
</comment>
<comment type="subunit">
    <text evidence="6">Immunoglobulins are composed of two identical heavy chains and two identical light chains; disulfide-linked.</text>
</comment>
<comment type="subcellular location">
    <subcellularLocation>
        <location evidence="6 7">Secreted</location>
    </subcellularLocation>
    <subcellularLocation>
        <location evidence="6 7">Cell membrane</location>
    </subcellularLocation>
</comment>
<comment type="polymorphism">
    <text evidence="10">There are several alleles. The sequence shown is that of IMGT allele IGHV4-30-2*01.</text>
</comment>
<comment type="caution">
    <text evidence="10">For examples of full-length immunoglobulin heavy chains (of different isotypes) see AC P0DOX2, AC P0DOX3, AC P0DOX4, AC P0DOX5 and AC P0DOX6.</text>
</comment>
<feature type="signal peptide" evidence="2">
    <location>
        <begin position="1"/>
        <end position="19"/>
    </location>
</feature>
<feature type="chain" id="PRO_5007380447" description="Immunoglobulin heavy variable 4-30-2" evidence="2">
    <location>
        <begin position="20"/>
        <end position="118"/>
    </location>
</feature>
<feature type="domain" description="Ig-like" evidence="3">
    <location>
        <begin position="20"/>
        <end position="118" status="greater than"/>
    </location>
</feature>
<feature type="region of interest" description="Framework-1" evidence="1">
    <location>
        <begin position="20"/>
        <end position="44"/>
    </location>
</feature>
<feature type="region of interest" description="Complementarity-determining-1" evidence="1">
    <location>
        <begin position="45"/>
        <end position="54"/>
    </location>
</feature>
<feature type="region of interest" description="Framework-2" evidence="1">
    <location>
        <begin position="55"/>
        <end position="71"/>
    </location>
</feature>
<feature type="region of interest" description="Complementarity-determining-2" evidence="1">
    <location>
        <begin position="72"/>
        <end position="78"/>
    </location>
</feature>
<feature type="region of interest" description="Framework-3" evidence="1">
    <location>
        <begin position="79"/>
        <end position="116"/>
    </location>
</feature>
<feature type="region of interest" description="Complementarity-determining-3" evidence="1">
    <location>
        <begin position="117"/>
        <end position="118" status="greater than"/>
    </location>
</feature>
<feature type="disulfide bond" evidence="3">
    <location>
        <begin position="41"/>
        <end position="116"/>
    </location>
</feature>
<feature type="non-terminal residue">
    <location>
        <position position="118"/>
    </location>
</feature>